<comment type="function">
    <text evidence="1">Responsible for the release of ribosomes from messenger RNA at the termination of protein biosynthesis. May increase the efficiency of translation by recycling ribosomes from one round of translation to another.</text>
</comment>
<comment type="subcellular location">
    <subcellularLocation>
        <location evidence="1">Cytoplasm</location>
    </subcellularLocation>
</comment>
<comment type="similarity">
    <text evidence="1">Belongs to the RRF family.</text>
</comment>
<proteinExistence type="inferred from homology"/>
<protein>
    <recommendedName>
        <fullName evidence="1">Ribosome-recycling factor</fullName>
        <shortName evidence="1">RRF</shortName>
    </recommendedName>
    <alternativeName>
        <fullName evidence="1">Ribosome-releasing factor</fullName>
    </alternativeName>
</protein>
<organism>
    <name type="scientific">Desulfitobacterium hafniense (strain Y51)</name>
    <dbReference type="NCBI Taxonomy" id="138119"/>
    <lineage>
        <taxon>Bacteria</taxon>
        <taxon>Bacillati</taxon>
        <taxon>Bacillota</taxon>
        <taxon>Clostridia</taxon>
        <taxon>Eubacteriales</taxon>
        <taxon>Desulfitobacteriaceae</taxon>
        <taxon>Desulfitobacterium</taxon>
    </lineage>
</organism>
<evidence type="ECO:0000255" key="1">
    <source>
        <dbReference type="HAMAP-Rule" id="MF_00040"/>
    </source>
</evidence>
<evidence type="ECO:0000256" key="2">
    <source>
        <dbReference type="SAM" id="MobiDB-lite"/>
    </source>
</evidence>
<keyword id="KW-0963">Cytoplasm</keyword>
<keyword id="KW-0648">Protein biosynthesis</keyword>
<keyword id="KW-1185">Reference proteome</keyword>
<gene>
    <name evidence="1" type="primary">frr</name>
    <name type="ordered locus">DSY2543</name>
</gene>
<sequence>MINDVLKEAEDRMVKAVEALKREYATIRAGRANPNMLDKITVEYYGTQTPVNQLANISVPEPRMLTIQPWDKSSLPMIEKAILKSDLGLNPSSDGTVIRLLIPQLTAERRTEIVKTVKKKAEDSRVAVRNIRRDSNDELKKLEKDHTASEDEVKRAQDDVQKMTDKFVKEIERIMGTKEKEIMEV</sequence>
<name>RRF_DESHY</name>
<accession>Q24UG0</accession>
<dbReference type="EMBL" id="AP008230">
    <property type="protein sequence ID" value="BAE84332.1"/>
    <property type="molecule type" value="Genomic_DNA"/>
</dbReference>
<dbReference type="RefSeq" id="WP_005810666.1">
    <property type="nucleotide sequence ID" value="NC_007907.1"/>
</dbReference>
<dbReference type="SMR" id="Q24UG0"/>
<dbReference type="STRING" id="138119.DSY2543"/>
<dbReference type="KEGG" id="dsy:DSY2543"/>
<dbReference type="eggNOG" id="COG0233">
    <property type="taxonomic scope" value="Bacteria"/>
</dbReference>
<dbReference type="HOGENOM" id="CLU_073981_2_0_9"/>
<dbReference type="Proteomes" id="UP000001946">
    <property type="component" value="Chromosome"/>
</dbReference>
<dbReference type="GO" id="GO:0005737">
    <property type="term" value="C:cytoplasm"/>
    <property type="evidence" value="ECO:0007669"/>
    <property type="project" value="UniProtKB-SubCell"/>
</dbReference>
<dbReference type="GO" id="GO:0043023">
    <property type="term" value="F:ribosomal large subunit binding"/>
    <property type="evidence" value="ECO:0007669"/>
    <property type="project" value="TreeGrafter"/>
</dbReference>
<dbReference type="GO" id="GO:0006415">
    <property type="term" value="P:translational termination"/>
    <property type="evidence" value="ECO:0007669"/>
    <property type="project" value="UniProtKB-UniRule"/>
</dbReference>
<dbReference type="CDD" id="cd00520">
    <property type="entry name" value="RRF"/>
    <property type="match status" value="1"/>
</dbReference>
<dbReference type="FunFam" id="1.10.132.20:FF:000001">
    <property type="entry name" value="Ribosome-recycling factor"/>
    <property type="match status" value="1"/>
</dbReference>
<dbReference type="FunFam" id="3.30.1360.40:FF:000001">
    <property type="entry name" value="Ribosome-recycling factor"/>
    <property type="match status" value="1"/>
</dbReference>
<dbReference type="Gene3D" id="3.30.1360.40">
    <property type="match status" value="1"/>
</dbReference>
<dbReference type="Gene3D" id="1.10.132.20">
    <property type="entry name" value="Ribosome-recycling factor"/>
    <property type="match status" value="1"/>
</dbReference>
<dbReference type="HAMAP" id="MF_00040">
    <property type="entry name" value="RRF"/>
    <property type="match status" value="1"/>
</dbReference>
<dbReference type="InterPro" id="IPR002661">
    <property type="entry name" value="Ribosome_recyc_fac"/>
</dbReference>
<dbReference type="InterPro" id="IPR023584">
    <property type="entry name" value="Ribosome_recyc_fac_dom"/>
</dbReference>
<dbReference type="InterPro" id="IPR036191">
    <property type="entry name" value="RRF_sf"/>
</dbReference>
<dbReference type="NCBIfam" id="TIGR00496">
    <property type="entry name" value="frr"/>
    <property type="match status" value="1"/>
</dbReference>
<dbReference type="PANTHER" id="PTHR20982:SF3">
    <property type="entry name" value="MITOCHONDRIAL RIBOSOME RECYCLING FACTOR PSEUDO 1"/>
    <property type="match status" value="1"/>
</dbReference>
<dbReference type="PANTHER" id="PTHR20982">
    <property type="entry name" value="RIBOSOME RECYCLING FACTOR"/>
    <property type="match status" value="1"/>
</dbReference>
<dbReference type="Pfam" id="PF01765">
    <property type="entry name" value="RRF"/>
    <property type="match status" value="1"/>
</dbReference>
<dbReference type="SUPFAM" id="SSF55194">
    <property type="entry name" value="Ribosome recycling factor, RRF"/>
    <property type="match status" value="1"/>
</dbReference>
<reference key="1">
    <citation type="journal article" date="2006" name="J. Bacteriol.">
        <title>Complete genome sequence of the dehalorespiring bacterium Desulfitobacterium hafniense Y51 and comparison with Dehalococcoides ethenogenes 195.</title>
        <authorList>
            <person name="Nonaka H."/>
            <person name="Keresztes G."/>
            <person name="Shinoda Y."/>
            <person name="Ikenaga Y."/>
            <person name="Abe M."/>
            <person name="Naito K."/>
            <person name="Inatomi K."/>
            <person name="Furukawa K."/>
            <person name="Inui M."/>
            <person name="Yukawa H."/>
        </authorList>
    </citation>
    <scope>NUCLEOTIDE SEQUENCE [LARGE SCALE GENOMIC DNA]</scope>
    <source>
        <strain>Y51</strain>
    </source>
</reference>
<feature type="chain" id="PRO_1000003154" description="Ribosome-recycling factor">
    <location>
        <begin position="1"/>
        <end position="185"/>
    </location>
</feature>
<feature type="region of interest" description="Disordered" evidence="2">
    <location>
        <begin position="137"/>
        <end position="158"/>
    </location>
</feature>